<dbReference type="EC" id="1.1.1.383" evidence="4"/>
<dbReference type="EMBL" id="CP000448">
    <property type="protein sequence ID" value="ABI69435.1"/>
    <property type="molecule type" value="Genomic_DNA"/>
</dbReference>
<dbReference type="RefSeq" id="WP_011641526.1">
    <property type="nucleotide sequence ID" value="NC_008346.1"/>
</dbReference>
<dbReference type="SMR" id="Q0AV19"/>
<dbReference type="STRING" id="335541.Swol_2144"/>
<dbReference type="KEGG" id="swo:Swol_2144"/>
<dbReference type="eggNOG" id="COG0059">
    <property type="taxonomic scope" value="Bacteria"/>
</dbReference>
<dbReference type="HOGENOM" id="CLU_033821_0_1_9"/>
<dbReference type="OrthoDB" id="9804088at2"/>
<dbReference type="UniPathway" id="UPA00047">
    <property type="reaction ID" value="UER00056"/>
</dbReference>
<dbReference type="UniPathway" id="UPA00049">
    <property type="reaction ID" value="UER00060"/>
</dbReference>
<dbReference type="Proteomes" id="UP000001968">
    <property type="component" value="Chromosome"/>
</dbReference>
<dbReference type="GO" id="GO:0005829">
    <property type="term" value="C:cytosol"/>
    <property type="evidence" value="ECO:0007669"/>
    <property type="project" value="TreeGrafter"/>
</dbReference>
<dbReference type="GO" id="GO:0004455">
    <property type="term" value="F:ketol-acid reductoisomerase activity"/>
    <property type="evidence" value="ECO:0007669"/>
    <property type="project" value="UniProtKB-UniRule"/>
</dbReference>
<dbReference type="GO" id="GO:0000287">
    <property type="term" value="F:magnesium ion binding"/>
    <property type="evidence" value="ECO:0007669"/>
    <property type="project" value="UniProtKB-UniRule"/>
</dbReference>
<dbReference type="GO" id="GO:0050661">
    <property type="term" value="F:NADP binding"/>
    <property type="evidence" value="ECO:0007669"/>
    <property type="project" value="InterPro"/>
</dbReference>
<dbReference type="GO" id="GO:0009097">
    <property type="term" value="P:isoleucine biosynthetic process"/>
    <property type="evidence" value="ECO:0007669"/>
    <property type="project" value="UniProtKB-UniRule"/>
</dbReference>
<dbReference type="GO" id="GO:0009099">
    <property type="term" value="P:L-valine biosynthetic process"/>
    <property type="evidence" value="ECO:0007669"/>
    <property type="project" value="UniProtKB-UniRule"/>
</dbReference>
<dbReference type="FunFam" id="3.40.50.720:FF:000023">
    <property type="entry name" value="Ketol-acid reductoisomerase (NADP(+))"/>
    <property type="match status" value="1"/>
</dbReference>
<dbReference type="Gene3D" id="6.10.240.10">
    <property type="match status" value="1"/>
</dbReference>
<dbReference type="Gene3D" id="3.40.50.720">
    <property type="entry name" value="NAD(P)-binding Rossmann-like Domain"/>
    <property type="match status" value="1"/>
</dbReference>
<dbReference type="HAMAP" id="MF_00435">
    <property type="entry name" value="IlvC"/>
    <property type="match status" value="1"/>
</dbReference>
<dbReference type="InterPro" id="IPR008927">
    <property type="entry name" value="6-PGluconate_DH-like_C_sf"/>
</dbReference>
<dbReference type="InterPro" id="IPR013023">
    <property type="entry name" value="KARI"/>
</dbReference>
<dbReference type="InterPro" id="IPR000506">
    <property type="entry name" value="KARI_C"/>
</dbReference>
<dbReference type="InterPro" id="IPR013116">
    <property type="entry name" value="KARI_N"/>
</dbReference>
<dbReference type="InterPro" id="IPR014359">
    <property type="entry name" value="KARI_prok"/>
</dbReference>
<dbReference type="InterPro" id="IPR036291">
    <property type="entry name" value="NAD(P)-bd_dom_sf"/>
</dbReference>
<dbReference type="NCBIfam" id="TIGR00465">
    <property type="entry name" value="ilvC"/>
    <property type="match status" value="1"/>
</dbReference>
<dbReference type="NCBIfam" id="NF004017">
    <property type="entry name" value="PRK05479.1"/>
    <property type="match status" value="1"/>
</dbReference>
<dbReference type="NCBIfam" id="NF009940">
    <property type="entry name" value="PRK13403.1"/>
    <property type="match status" value="1"/>
</dbReference>
<dbReference type="PANTHER" id="PTHR21371">
    <property type="entry name" value="KETOL-ACID REDUCTOISOMERASE, MITOCHONDRIAL"/>
    <property type="match status" value="1"/>
</dbReference>
<dbReference type="PANTHER" id="PTHR21371:SF1">
    <property type="entry name" value="KETOL-ACID REDUCTOISOMERASE, MITOCHONDRIAL"/>
    <property type="match status" value="1"/>
</dbReference>
<dbReference type="Pfam" id="PF01450">
    <property type="entry name" value="KARI_C"/>
    <property type="match status" value="1"/>
</dbReference>
<dbReference type="Pfam" id="PF07991">
    <property type="entry name" value="KARI_N"/>
    <property type="match status" value="1"/>
</dbReference>
<dbReference type="PIRSF" id="PIRSF000116">
    <property type="entry name" value="IlvC_gammaproteo"/>
    <property type="match status" value="1"/>
</dbReference>
<dbReference type="SUPFAM" id="SSF48179">
    <property type="entry name" value="6-phosphogluconate dehydrogenase C-terminal domain-like"/>
    <property type="match status" value="1"/>
</dbReference>
<dbReference type="SUPFAM" id="SSF51735">
    <property type="entry name" value="NAD(P)-binding Rossmann-fold domains"/>
    <property type="match status" value="1"/>
</dbReference>
<dbReference type="PROSITE" id="PS51851">
    <property type="entry name" value="KARI_C"/>
    <property type="match status" value="1"/>
</dbReference>
<dbReference type="PROSITE" id="PS51850">
    <property type="entry name" value="KARI_N"/>
    <property type="match status" value="1"/>
</dbReference>
<reference key="1">
    <citation type="journal article" date="2010" name="Environ. Microbiol.">
        <title>The genome of Syntrophomonas wolfei: new insights into syntrophic metabolism and biohydrogen production.</title>
        <authorList>
            <person name="Sieber J.R."/>
            <person name="Sims D.R."/>
            <person name="Han C."/>
            <person name="Kim E."/>
            <person name="Lykidis A."/>
            <person name="Lapidus A.L."/>
            <person name="McDonnald E."/>
            <person name="Rohlin L."/>
            <person name="Culley D.E."/>
            <person name="Gunsalus R."/>
            <person name="McInerney M.J."/>
        </authorList>
    </citation>
    <scope>NUCLEOTIDE SEQUENCE [LARGE SCALE GENOMIC DNA]</scope>
    <source>
        <strain>DSM 2245B / Goettingen</strain>
    </source>
</reference>
<reference key="2">
    <citation type="journal article" date="2014" name="Metab. Eng.">
        <title>Uncovering rare NADH-preferring ketol-acid reductoisomerases.</title>
        <authorList>
            <person name="Brinkmann-Chen S."/>
            <person name="Cahn J.K."/>
            <person name="Arnold F.H."/>
        </authorList>
    </citation>
    <scope>FUNCTION</scope>
    <scope>CATALYTIC ACTIVITY</scope>
    <scope>BIOPHYSICOCHEMICAL PROPERTIES</scope>
    <scope>SUBSTRATE SPECIFICITY</scope>
</reference>
<protein>
    <recommendedName>
        <fullName evidence="5">Ketol-acid reductoisomerase (NAD(P)(+))</fullName>
        <shortName evidence="1 5">KARI</shortName>
        <ecNumber evidence="4">1.1.1.383</ecNumber>
    </recommendedName>
    <alternativeName>
        <fullName evidence="1">Acetohydroxy-acid isomeroreductase</fullName>
        <shortName evidence="1">AHIR</shortName>
    </alternativeName>
    <alternativeName>
        <fullName evidence="1">Alpha-keto-beta-hydroxylacyl reductoisomerase</fullName>
    </alternativeName>
    <alternativeName>
        <fullName evidence="1 5">Ketol-acid reductoisomerase type 1</fullName>
    </alternativeName>
    <alternativeName>
        <fullName evidence="1 5">Ketol-acid reductoisomerase type I</fullName>
    </alternativeName>
</protein>
<feature type="chain" id="PRO_1000050586" description="Ketol-acid reductoisomerase (NAD(P)(+))">
    <location>
        <begin position="1"/>
        <end position="337"/>
    </location>
</feature>
<feature type="domain" description="KARI N-terminal Rossmann" evidence="2">
    <location>
        <begin position="2"/>
        <end position="187"/>
    </location>
</feature>
<feature type="domain" description="KARI C-terminal knotted" evidence="3">
    <location>
        <begin position="188"/>
        <end position="333"/>
    </location>
</feature>
<feature type="active site" evidence="1">
    <location>
        <position position="113"/>
    </location>
</feature>
<feature type="binding site" evidence="1 6">
    <location>
        <begin position="25"/>
        <end position="28"/>
    </location>
    <ligand>
        <name>NADP(+)</name>
        <dbReference type="ChEBI" id="CHEBI:58349"/>
    </ligand>
</feature>
<feature type="binding site" evidence="1 6">
    <location>
        <position position="48"/>
    </location>
    <ligand>
        <name>NADP(+)</name>
        <dbReference type="ChEBI" id="CHEBI:58349"/>
    </ligand>
</feature>
<feature type="binding site" evidence="1 6">
    <location>
        <begin position="88"/>
        <end position="91"/>
    </location>
    <ligand>
        <name>NADP(+)</name>
        <dbReference type="ChEBI" id="CHEBI:58349"/>
    </ligand>
</feature>
<feature type="binding site" evidence="1 6">
    <location>
        <position position="139"/>
    </location>
    <ligand>
        <name>NADP(+)</name>
        <dbReference type="ChEBI" id="CHEBI:58349"/>
    </ligand>
</feature>
<feature type="binding site" evidence="1">
    <location>
        <position position="196"/>
    </location>
    <ligand>
        <name>Mg(2+)</name>
        <dbReference type="ChEBI" id="CHEBI:18420"/>
        <label>1</label>
    </ligand>
</feature>
<feature type="binding site" evidence="1">
    <location>
        <position position="196"/>
    </location>
    <ligand>
        <name>Mg(2+)</name>
        <dbReference type="ChEBI" id="CHEBI:18420"/>
        <label>2</label>
    </ligand>
</feature>
<feature type="binding site" evidence="1">
    <location>
        <position position="200"/>
    </location>
    <ligand>
        <name>Mg(2+)</name>
        <dbReference type="ChEBI" id="CHEBI:18420"/>
        <label>1</label>
    </ligand>
</feature>
<feature type="binding site" evidence="1">
    <location>
        <position position="232"/>
    </location>
    <ligand>
        <name>Mg(2+)</name>
        <dbReference type="ChEBI" id="CHEBI:18420"/>
        <label>2</label>
    </ligand>
</feature>
<feature type="binding site" evidence="1">
    <location>
        <position position="236"/>
    </location>
    <ligand>
        <name>Mg(2+)</name>
        <dbReference type="ChEBI" id="CHEBI:18420"/>
        <label>2</label>
    </ligand>
</feature>
<feature type="binding site" evidence="1">
    <location>
        <position position="257"/>
    </location>
    <ligand>
        <name>substrate</name>
    </ligand>
</feature>
<name>ILVC_SYNWW</name>
<organism>
    <name type="scientific">Syntrophomonas wolfei subsp. wolfei (strain DSM 2245B / Goettingen)</name>
    <dbReference type="NCBI Taxonomy" id="335541"/>
    <lineage>
        <taxon>Bacteria</taxon>
        <taxon>Bacillati</taxon>
        <taxon>Bacillota</taxon>
        <taxon>Clostridia</taxon>
        <taxon>Eubacteriales</taxon>
        <taxon>Syntrophomonadaceae</taxon>
        <taxon>Syntrophomonas</taxon>
    </lineage>
</organism>
<keyword id="KW-0028">Amino-acid biosynthesis</keyword>
<keyword id="KW-0100">Branched-chain amino acid biosynthesis</keyword>
<keyword id="KW-0460">Magnesium</keyword>
<keyword id="KW-0479">Metal-binding</keyword>
<keyword id="KW-0521">NADP</keyword>
<keyword id="KW-0560">Oxidoreductase</keyword>
<keyword id="KW-1185">Reference proteome</keyword>
<sequence>MARMFYDADANLENLKGKTIAVMGFGSQGHAQAQNLKESGLNVIVGLRKPFDEASEKEWNAVIAAGITPMSVAEAAEAADVIQILLPDEVQARVYNAEIKPYLKAGNALGFSHGFNIHFGQIVPPAFVDVFMVAPKSPGHLVRRMYVKGAGVPGLVAVQQDYSGKAKDLALAYACGIGCTRAGVIETSFQEETETDLFGEQCVLCGGVTELVKAGFETLVEAGYQPEIAYFECMHELKLIVDLMYEGGMSYMRYSISDTAEWGDYTKGPEIIGEEARYAMYEALQDIQDGSFAKGWLLENMVGRPRFNALKRQNREHLIEEVGAELRGMMPWLKETK</sequence>
<proteinExistence type="evidence at protein level"/>
<gene>
    <name evidence="1" type="primary">ilvC</name>
    <name type="ordered locus">Swol_2144</name>
</gene>
<comment type="function">
    <text evidence="4">Involved in the biosynthesis of branched-chain amino acids (BCAA). Catalyzes an alkyl-migration followed by a ketol-acid reduction of (S)-2-acetolactate (S2AL) to yield (R)-2,3-dihydroxy-isovalerate. In the isomerase reaction, S2AL is rearranged via a Mg-dependent methyl migration to produce 3-hydroxy-3-methyl-2-ketobutyrate (HMKB). In the reductase reaction, this 2-ketoacid undergoes a metal-dependent reduction by NADPH or NADH to yield (R)-2,3-dihydroxy-isovalerate.</text>
</comment>
<comment type="catalytic activity">
    <reaction evidence="4">
        <text>(2R)-2,3-dihydroxy-3-methylbutanoate + NAD(+) = (2S)-2-acetolactate + NADH + H(+)</text>
        <dbReference type="Rhea" id="RHEA:30627"/>
        <dbReference type="ChEBI" id="CHEBI:15378"/>
        <dbReference type="ChEBI" id="CHEBI:49072"/>
        <dbReference type="ChEBI" id="CHEBI:57540"/>
        <dbReference type="ChEBI" id="CHEBI:57945"/>
        <dbReference type="ChEBI" id="CHEBI:58476"/>
        <dbReference type="EC" id="1.1.1.383"/>
    </reaction>
</comment>
<comment type="catalytic activity">
    <reaction evidence="4">
        <text>(2R)-2,3-dihydroxy-3-methylbutanoate + NADP(+) = (2S)-2-acetolactate + NADPH + H(+)</text>
        <dbReference type="Rhea" id="RHEA:22068"/>
        <dbReference type="ChEBI" id="CHEBI:15378"/>
        <dbReference type="ChEBI" id="CHEBI:49072"/>
        <dbReference type="ChEBI" id="CHEBI:57783"/>
        <dbReference type="ChEBI" id="CHEBI:58349"/>
        <dbReference type="ChEBI" id="CHEBI:58476"/>
        <dbReference type="EC" id="1.1.1.383"/>
    </reaction>
</comment>
<comment type="cofactor">
    <cofactor evidence="1">
        <name>Mg(2+)</name>
        <dbReference type="ChEBI" id="CHEBI:18420"/>
    </cofactor>
    <text evidence="1">Binds 2 magnesium ions per subunit.</text>
</comment>
<comment type="biophysicochemical properties">
    <kinetics>
        <KM evidence="4">44 uM for NADPH (at pH 7 with S2AL as substrate)</KM>
        <KM evidence="4">57 uM for NADH (at pH 7 with S2AL as substrate)</KM>
        <text evidence="4">kcat is 0.28 sec(-1) for reductoisomerase activity with NADH (at pH 7 with S2AL as substrate). kcat is 0.22 sec(-1) for reductoisomerase activity with NADPH (at pH 7 with S2AL as substrate).</text>
    </kinetics>
</comment>
<comment type="pathway">
    <text evidence="1">Amino-acid biosynthesis; L-isoleucine biosynthesis; L-isoleucine from 2-oxobutanoate: step 2/4.</text>
</comment>
<comment type="pathway">
    <text evidence="1">Amino-acid biosynthesis; L-valine biosynthesis; L-valine from pyruvate: step 2/4.</text>
</comment>
<comment type="similarity">
    <text evidence="1">Belongs to the ketol-acid reductoisomerase family.</text>
</comment>
<evidence type="ECO:0000255" key="1">
    <source>
        <dbReference type="HAMAP-Rule" id="MF_00435"/>
    </source>
</evidence>
<evidence type="ECO:0000255" key="2">
    <source>
        <dbReference type="PROSITE-ProRule" id="PRU01197"/>
    </source>
</evidence>
<evidence type="ECO:0000255" key="3">
    <source>
        <dbReference type="PROSITE-ProRule" id="PRU01198"/>
    </source>
</evidence>
<evidence type="ECO:0000269" key="4">
    <source>
    </source>
</evidence>
<evidence type="ECO:0000303" key="5">
    <source>
    </source>
</evidence>
<evidence type="ECO:0000305" key="6"/>
<accession>Q0AV19</accession>